<feature type="chain" id="PRO_0000324662" description="Transcription cofactor vestigial-like protein 3">
    <location>
        <begin position="1"/>
        <end position="326"/>
    </location>
</feature>
<feature type="region of interest" description="Disordered" evidence="4">
    <location>
        <begin position="54"/>
        <end position="82"/>
    </location>
</feature>
<feature type="region of interest" description="Disordered" evidence="4">
    <location>
        <begin position="184"/>
        <end position="208"/>
    </location>
</feature>
<feature type="compositionally biased region" description="Acidic residues" evidence="4">
    <location>
        <begin position="64"/>
        <end position="78"/>
    </location>
</feature>
<feature type="cross-link" description="Glycyl lysine isopeptide (Lys-Gly) (interchain with G-Cter in SUMO2)" evidence="1">
    <location>
        <position position="62"/>
    </location>
</feature>
<feature type="cross-link" description="Glycyl lysine isopeptide (Lys-Gly) (interchain with G-Cter in SUMO2)" evidence="1">
    <location>
        <position position="129"/>
    </location>
</feature>
<feature type="sequence conflict" description="In Ref. 2; BC042696." evidence="6" ref="2">
    <location>
        <position position="44"/>
    </location>
</feature>
<protein>
    <recommendedName>
        <fullName>Transcription cofactor vestigial-like protein 3</fullName>
        <shortName>Vgl-3</shortName>
    </recommendedName>
</protein>
<name>VGLL3_MOUSE</name>
<sequence length="326" mass="35999">MSCAEVMYHPQPYGAPQYLPNPVAAATCPTACYHPAPQPGQQKKLAVYSKMQDSLEVTLPSKQEEEEEEEEDEEEEEKDQPAEMEYLNSRCVLFTYFQGDIGSVVDEHFSRALGQANTLHPESAISKSKMGLTPLWRDSSALSSQRSNFPTSFWTSSYQPPPAPCLGGVHPDFQVTAPHGTFTTADPNSWPGHGLHQTGPAPPPTASESWHYPLASQVSPSYSHMHDMYLRHHHPHAHVHHRHHHHHHPTAGSALDPAYGHLLMPSVRAARIPAPQCDITKTDLTTVTTATSAWAGAFHGTVDIVPSVGFDTGLQHQDKSKESTWY</sequence>
<reference key="1">
    <citation type="journal article" date="2009" name="PLoS Biol.">
        <title>Lineage-specific biology revealed by a finished genome assembly of the mouse.</title>
        <authorList>
            <person name="Church D.M."/>
            <person name="Goodstadt L."/>
            <person name="Hillier L.W."/>
            <person name="Zody M.C."/>
            <person name="Goldstein S."/>
            <person name="She X."/>
            <person name="Bult C.J."/>
            <person name="Agarwala R."/>
            <person name="Cherry J.L."/>
            <person name="DiCuccio M."/>
            <person name="Hlavina W."/>
            <person name="Kapustin Y."/>
            <person name="Meric P."/>
            <person name="Maglott D."/>
            <person name="Birtle Z."/>
            <person name="Marques A.C."/>
            <person name="Graves T."/>
            <person name="Zhou S."/>
            <person name="Teague B."/>
            <person name="Potamousis K."/>
            <person name="Churas C."/>
            <person name="Place M."/>
            <person name="Herschleb J."/>
            <person name="Runnheim R."/>
            <person name="Forrest D."/>
            <person name="Amos-Landgraf J."/>
            <person name="Schwartz D.C."/>
            <person name="Cheng Z."/>
            <person name="Lindblad-Toh K."/>
            <person name="Eichler E.E."/>
            <person name="Ponting C.P."/>
        </authorList>
    </citation>
    <scope>NUCLEOTIDE SEQUENCE [LARGE SCALE GENOMIC DNA]</scope>
    <source>
        <strain>C57BL/6J</strain>
    </source>
</reference>
<reference evidence="6" key="2">
    <citation type="journal article" date="2004" name="Genome Res.">
        <title>The status, quality, and expansion of the NIH full-length cDNA project: the Mammalian Gene Collection (MGC).</title>
        <authorList>
            <consortium name="The MGC Project Team"/>
        </authorList>
    </citation>
    <scope>NUCLEOTIDE SEQUENCE [LARGE SCALE MRNA] OF 26-326</scope>
    <source>
        <tissue evidence="5">Mammary tumor</tissue>
    </source>
</reference>
<organism>
    <name type="scientific">Mus musculus</name>
    <name type="common">Mouse</name>
    <dbReference type="NCBI Taxonomy" id="10090"/>
    <lineage>
        <taxon>Eukaryota</taxon>
        <taxon>Metazoa</taxon>
        <taxon>Chordata</taxon>
        <taxon>Craniata</taxon>
        <taxon>Vertebrata</taxon>
        <taxon>Euteleostomi</taxon>
        <taxon>Mammalia</taxon>
        <taxon>Eutheria</taxon>
        <taxon>Euarchontoglires</taxon>
        <taxon>Glires</taxon>
        <taxon>Rodentia</taxon>
        <taxon>Myomorpha</taxon>
        <taxon>Muroidea</taxon>
        <taxon>Muridae</taxon>
        <taxon>Murinae</taxon>
        <taxon>Mus</taxon>
        <taxon>Mus</taxon>
    </lineage>
</organism>
<accession>P85442</accession>
<proteinExistence type="evidence at transcript level"/>
<comment type="function">
    <text evidence="2">May act as a specific coactivator for the mammalian TEFs.</text>
</comment>
<comment type="subcellular location">
    <subcellularLocation>
        <location evidence="2">Nucleus</location>
    </subcellularLocation>
</comment>
<comment type="similarity">
    <text evidence="3">Belongs to the vestigial family.</text>
</comment>
<evidence type="ECO:0000250" key="1">
    <source>
        <dbReference type="UniProtKB" id="A8MV65"/>
    </source>
</evidence>
<evidence type="ECO:0000250" key="2">
    <source>
        <dbReference type="UniProtKB" id="Q8N8G2"/>
    </source>
</evidence>
<evidence type="ECO:0000255" key="3"/>
<evidence type="ECO:0000256" key="4">
    <source>
        <dbReference type="SAM" id="MobiDB-lite"/>
    </source>
</evidence>
<evidence type="ECO:0000269" key="5">
    <source>
    </source>
</evidence>
<evidence type="ECO:0000305" key="6"/>
<evidence type="ECO:0000312" key="7">
    <source>
        <dbReference type="MGI" id="MGI:1920819"/>
    </source>
</evidence>
<keyword id="KW-1017">Isopeptide bond</keyword>
<keyword id="KW-0539">Nucleus</keyword>
<keyword id="KW-1185">Reference proteome</keyword>
<keyword id="KW-0804">Transcription</keyword>
<keyword id="KW-0805">Transcription regulation</keyword>
<keyword id="KW-0832">Ubl conjugation</keyword>
<gene>
    <name evidence="7" type="primary">Vgll3</name>
</gene>
<dbReference type="EMBL" id="CT010565">
    <property type="status" value="NOT_ANNOTATED_CDS"/>
    <property type="molecule type" value="Genomic_DNA"/>
</dbReference>
<dbReference type="EMBL" id="BC042696">
    <property type="status" value="NOT_ANNOTATED_CDS"/>
    <property type="molecule type" value="mRNA"/>
</dbReference>
<dbReference type="RefSeq" id="NP_001355689.1">
    <property type="nucleotide sequence ID" value="NM_001368760.1"/>
</dbReference>
<dbReference type="RefSeq" id="XP_006523160.1">
    <property type="nucleotide sequence ID" value="XM_006523097.3"/>
</dbReference>
<dbReference type="FunCoup" id="P85442">
    <property type="interactions" value="963"/>
</dbReference>
<dbReference type="STRING" id="10090.ENSMUSP00000131500"/>
<dbReference type="GlyGen" id="P85442">
    <property type="glycosylation" value="2 sites, 1 O-linked glycan (1 site)"/>
</dbReference>
<dbReference type="iPTMnet" id="P85442"/>
<dbReference type="PhosphoSitePlus" id="P85442"/>
<dbReference type="PaxDb" id="10090-ENSMUSP00000131500"/>
<dbReference type="ProteomicsDB" id="299951"/>
<dbReference type="GeneID" id="73569"/>
<dbReference type="AGR" id="MGI:1920819"/>
<dbReference type="MGI" id="MGI:1920819">
    <property type="gene designation" value="Vgll3"/>
</dbReference>
<dbReference type="eggNOG" id="ENOG502R6G3">
    <property type="taxonomic scope" value="Eukaryota"/>
</dbReference>
<dbReference type="InParanoid" id="P85442"/>
<dbReference type="PhylomeDB" id="P85442"/>
<dbReference type="BioGRID-ORCS" id="73569">
    <property type="hits" value="0 hits in 77 CRISPR screens"/>
</dbReference>
<dbReference type="CD-CODE" id="C582EEC7">
    <property type="entry name" value="NONO"/>
</dbReference>
<dbReference type="PRO" id="PR:P85442"/>
<dbReference type="Proteomes" id="UP000000589">
    <property type="component" value="Unplaced"/>
</dbReference>
<dbReference type="RNAct" id="P85442">
    <property type="molecule type" value="protein"/>
</dbReference>
<dbReference type="GO" id="GO:0005634">
    <property type="term" value="C:nucleus"/>
    <property type="evidence" value="ECO:0007669"/>
    <property type="project" value="UniProtKB-SubCell"/>
</dbReference>
<dbReference type="GO" id="GO:0006355">
    <property type="term" value="P:regulation of DNA-templated transcription"/>
    <property type="evidence" value="ECO:0007669"/>
    <property type="project" value="InterPro"/>
</dbReference>
<dbReference type="InterPro" id="IPR006627">
    <property type="entry name" value="TDU_repeat"/>
</dbReference>
<dbReference type="InterPro" id="IPR011520">
    <property type="entry name" value="Vg_fam"/>
</dbReference>
<dbReference type="PANTHER" id="PTHR15950">
    <property type="entry name" value="TRANSCRIPTION COFACTOR VESTIGIAL-LIKE PROTEIN"/>
    <property type="match status" value="1"/>
</dbReference>
<dbReference type="PANTHER" id="PTHR15950:SF16">
    <property type="entry name" value="TRANSCRIPTION COFACTOR VESTIGIAL-LIKE PROTEIN 3"/>
    <property type="match status" value="1"/>
</dbReference>
<dbReference type="Pfam" id="PF07545">
    <property type="entry name" value="Vg_Tdu"/>
    <property type="match status" value="1"/>
</dbReference>
<dbReference type="SMART" id="SM00711">
    <property type="entry name" value="TDU"/>
    <property type="match status" value="1"/>
</dbReference>